<protein>
    <recommendedName>
        <fullName evidence="1">Chorismate synthase</fullName>
        <shortName evidence="1">CS</shortName>
        <ecNumber evidence="1">4.2.3.5</ecNumber>
    </recommendedName>
    <alternativeName>
        <fullName evidence="1">5-enolpyruvylshikimate-3-phosphate phospholyase</fullName>
    </alternativeName>
</protein>
<sequence>MSGNSFGKLFTVTTAGESHGPALVAIVDGCPAGLSLTEADIQPDIDRRKTGKSRFTSQRRESDQVKILSGVFEGVTTGTPIALLIENADQRPRDYSQIKDLFRPGHGDYTYFKKYGFRDYRGGGRASARETVMRVAAGAIAKKYLREKVNLTIQGYTAAVGAIRAERIDLSAVEKNPFFFPDEVQIPHLEQLIMKLRRDGDSIGARLNVIAKGVPCGLGEPVFDKLDADIASAMMGINAVKGVEIGDGFAVVEQKGSFHRDELSKKGFLSNHAGGTLAGISSGQDILVSLAFKPASSIRIPGKTLDINGKAVEVVTTGRHDPCVGLRAVPIAEAMLALVLMDHYLRYKAQRG</sequence>
<reference key="1">
    <citation type="journal article" date="2003" name="Proc. Natl. Acad. Sci. U.S.A.">
        <title>Complete genome sequence of the Q-fever pathogen, Coxiella burnetii.</title>
        <authorList>
            <person name="Seshadri R."/>
            <person name="Paulsen I.T."/>
            <person name="Eisen J.A."/>
            <person name="Read T.D."/>
            <person name="Nelson K.E."/>
            <person name="Nelson W.C."/>
            <person name="Ward N.L."/>
            <person name="Tettelin H."/>
            <person name="Davidsen T.M."/>
            <person name="Beanan M.J."/>
            <person name="DeBoy R.T."/>
            <person name="Daugherty S.C."/>
            <person name="Brinkac L.M."/>
            <person name="Madupu R."/>
            <person name="Dodson R.J."/>
            <person name="Khouri H.M."/>
            <person name="Lee K.H."/>
            <person name="Carty H.A."/>
            <person name="Scanlan D."/>
            <person name="Heinzen R.A."/>
            <person name="Thompson H.A."/>
            <person name="Samuel J.E."/>
            <person name="Fraser C.M."/>
            <person name="Heidelberg J.F."/>
        </authorList>
    </citation>
    <scope>NUCLEOTIDE SEQUENCE [LARGE SCALE GENOMIC DNA]</scope>
    <source>
        <strain>RSA 493 / Nine Mile phase I</strain>
    </source>
</reference>
<feature type="chain" id="PRO_0000140580" description="Chorismate synthase">
    <location>
        <begin position="1"/>
        <end position="352"/>
    </location>
</feature>
<feature type="binding site" evidence="1">
    <location>
        <position position="48"/>
    </location>
    <ligand>
        <name>NADP(+)</name>
        <dbReference type="ChEBI" id="CHEBI:58349"/>
    </ligand>
</feature>
<feature type="binding site" evidence="1">
    <location>
        <position position="54"/>
    </location>
    <ligand>
        <name>NADP(+)</name>
        <dbReference type="ChEBI" id="CHEBI:58349"/>
    </ligand>
</feature>
<feature type="binding site" evidence="1">
    <location>
        <begin position="125"/>
        <end position="127"/>
    </location>
    <ligand>
        <name>FMN</name>
        <dbReference type="ChEBI" id="CHEBI:58210"/>
    </ligand>
</feature>
<feature type="binding site" evidence="1">
    <location>
        <begin position="238"/>
        <end position="239"/>
    </location>
    <ligand>
        <name>FMN</name>
        <dbReference type="ChEBI" id="CHEBI:58210"/>
    </ligand>
</feature>
<feature type="binding site" evidence="1">
    <location>
        <position position="278"/>
    </location>
    <ligand>
        <name>FMN</name>
        <dbReference type="ChEBI" id="CHEBI:58210"/>
    </ligand>
</feature>
<feature type="binding site" evidence="1">
    <location>
        <begin position="293"/>
        <end position="297"/>
    </location>
    <ligand>
        <name>FMN</name>
        <dbReference type="ChEBI" id="CHEBI:58210"/>
    </ligand>
</feature>
<feature type="binding site" evidence="1">
    <location>
        <position position="319"/>
    </location>
    <ligand>
        <name>FMN</name>
        <dbReference type="ChEBI" id="CHEBI:58210"/>
    </ligand>
</feature>
<organism>
    <name type="scientific">Coxiella burnetii (strain RSA 493 / Nine Mile phase I)</name>
    <dbReference type="NCBI Taxonomy" id="227377"/>
    <lineage>
        <taxon>Bacteria</taxon>
        <taxon>Pseudomonadati</taxon>
        <taxon>Pseudomonadota</taxon>
        <taxon>Gammaproteobacteria</taxon>
        <taxon>Legionellales</taxon>
        <taxon>Coxiellaceae</taxon>
        <taxon>Coxiella</taxon>
    </lineage>
</organism>
<gene>
    <name evidence="1" type="primary">aroC</name>
    <name type="ordered locus">CBU_0874</name>
</gene>
<evidence type="ECO:0000255" key="1">
    <source>
        <dbReference type="HAMAP-Rule" id="MF_00300"/>
    </source>
</evidence>
<accession>Q83D67</accession>
<proteinExistence type="inferred from homology"/>
<keyword id="KW-0028">Amino-acid biosynthesis</keyword>
<keyword id="KW-0057">Aromatic amino acid biosynthesis</keyword>
<keyword id="KW-0274">FAD</keyword>
<keyword id="KW-0285">Flavoprotein</keyword>
<keyword id="KW-0288">FMN</keyword>
<keyword id="KW-0456">Lyase</keyword>
<keyword id="KW-0521">NADP</keyword>
<keyword id="KW-1185">Reference proteome</keyword>
<comment type="function">
    <text evidence="1">Catalyzes the anti-1,4-elimination of the C-3 phosphate and the C-6 proR hydrogen from 5-enolpyruvylshikimate-3-phosphate (EPSP) to yield chorismate, which is the branch point compound that serves as the starting substrate for the three terminal pathways of aromatic amino acid biosynthesis. This reaction introduces a second double bond into the aromatic ring system.</text>
</comment>
<comment type="catalytic activity">
    <reaction evidence="1">
        <text>5-O-(1-carboxyvinyl)-3-phosphoshikimate = chorismate + phosphate</text>
        <dbReference type="Rhea" id="RHEA:21020"/>
        <dbReference type="ChEBI" id="CHEBI:29748"/>
        <dbReference type="ChEBI" id="CHEBI:43474"/>
        <dbReference type="ChEBI" id="CHEBI:57701"/>
        <dbReference type="EC" id="4.2.3.5"/>
    </reaction>
</comment>
<comment type="cofactor">
    <cofactor evidence="1">
        <name>FMNH2</name>
        <dbReference type="ChEBI" id="CHEBI:57618"/>
    </cofactor>
    <text evidence="1">Reduced FMN (FMNH(2)).</text>
</comment>
<comment type="pathway">
    <text evidence="1">Metabolic intermediate biosynthesis; chorismate biosynthesis; chorismate from D-erythrose 4-phosphate and phosphoenolpyruvate: step 7/7.</text>
</comment>
<comment type="subunit">
    <text evidence="1">Homotetramer.</text>
</comment>
<comment type="similarity">
    <text evidence="1">Belongs to the chorismate synthase family.</text>
</comment>
<name>AROC_COXBU</name>
<dbReference type="EC" id="4.2.3.5" evidence="1"/>
<dbReference type="EMBL" id="AE016828">
    <property type="protein sequence ID" value="AAO90406.1"/>
    <property type="molecule type" value="Genomic_DNA"/>
</dbReference>
<dbReference type="RefSeq" id="NP_819892.1">
    <property type="nucleotide sequence ID" value="NC_002971.4"/>
</dbReference>
<dbReference type="RefSeq" id="WP_005772323.1">
    <property type="nucleotide sequence ID" value="NZ_CDBG01000001.1"/>
</dbReference>
<dbReference type="SMR" id="Q83D67"/>
<dbReference type="STRING" id="227377.CBU_0874"/>
<dbReference type="EnsemblBacteria" id="AAO90406">
    <property type="protein sequence ID" value="AAO90406"/>
    <property type="gene ID" value="CBU_0874"/>
</dbReference>
<dbReference type="GeneID" id="1208767"/>
<dbReference type="KEGG" id="cbu:CBU_0874"/>
<dbReference type="PATRIC" id="fig|227377.7.peg.860"/>
<dbReference type="eggNOG" id="COG0082">
    <property type="taxonomic scope" value="Bacteria"/>
</dbReference>
<dbReference type="HOGENOM" id="CLU_034547_0_2_6"/>
<dbReference type="OrthoDB" id="9771806at2"/>
<dbReference type="UniPathway" id="UPA00053">
    <property type="reaction ID" value="UER00090"/>
</dbReference>
<dbReference type="Proteomes" id="UP000002671">
    <property type="component" value="Chromosome"/>
</dbReference>
<dbReference type="GO" id="GO:0005829">
    <property type="term" value="C:cytosol"/>
    <property type="evidence" value="ECO:0000318"/>
    <property type="project" value="GO_Central"/>
</dbReference>
<dbReference type="GO" id="GO:0004107">
    <property type="term" value="F:chorismate synthase activity"/>
    <property type="evidence" value="ECO:0000318"/>
    <property type="project" value="GO_Central"/>
</dbReference>
<dbReference type="GO" id="GO:0010181">
    <property type="term" value="F:FMN binding"/>
    <property type="evidence" value="ECO:0000318"/>
    <property type="project" value="GO_Central"/>
</dbReference>
<dbReference type="GO" id="GO:0008652">
    <property type="term" value="P:amino acid biosynthetic process"/>
    <property type="evidence" value="ECO:0007669"/>
    <property type="project" value="UniProtKB-KW"/>
</dbReference>
<dbReference type="GO" id="GO:0009073">
    <property type="term" value="P:aromatic amino acid family biosynthetic process"/>
    <property type="evidence" value="ECO:0000318"/>
    <property type="project" value="GO_Central"/>
</dbReference>
<dbReference type="GO" id="GO:0009423">
    <property type="term" value="P:chorismate biosynthetic process"/>
    <property type="evidence" value="ECO:0000318"/>
    <property type="project" value="GO_Central"/>
</dbReference>
<dbReference type="CDD" id="cd07304">
    <property type="entry name" value="Chorismate_synthase"/>
    <property type="match status" value="1"/>
</dbReference>
<dbReference type="FunFam" id="3.60.150.10:FF:000001">
    <property type="entry name" value="Chorismate synthase"/>
    <property type="match status" value="1"/>
</dbReference>
<dbReference type="Gene3D" id="3.60.150.10">
    <property type="entry name" value="Chorismate synthase AroC"/>
    <property type="match status" value="1"/>
</dbReference>
<dbReference type="HAMAP" id="MF_00300">
    <property type="entry name" value="Chorismate_synth"/>
    <property type="match status" value="1"/>
</dbReference>
<dbReference type="InterPro" id="IPR000453">
    <property type="entry name" value="Chorismate_synth"/>
</dbReference>
<dbReference type="InterPro" id="IPR035904">
    <property type="entry name" value="Chorismate_synth_AroC_sf"/>
</dbReference>
<dbReference type="InterPro" id="IPR020541">
    <property type="entry name" value="Chorismate_synthase_CS"/>
</dbReference>
<dbReference type="NCBIfam" id="TIGR00033">
    <property type="entry name" value="aroC"/>
    <property type="match status" value="1"/>
</dbReference>
<dbReference type="NCBIfam" id="NF003793">
    <property type="entry name" value="PRK05382.1"/>
    <property type="match status" value="1"/>
</dbReference>
<dbReference type="PANTHER" id="PTHR21085">
    <property type="entry name" value="CHORISMATE SYNTHASE"/>
    <property type="match status" value="1"/>
</dbReference>
<dbReference type="PANTHER" id="PTHR21085:SF0">
    <property type="entry name" value="CHORISMATE SYNTHASE"/>
    <property type="match status" value="1"/>
</dbReference>
<dbReference type="Pfam" id="PF01264">
    <property type="entry name" value="Chorismate_synt"/>
    <property type="match status" value="1"/>
</dbReference>
<dbReference type="PIRSF" id="PIRSF001456">
    <property type="entry name" value="Chorismate_synth"/>
    <property type="match status" value="1"/>
</dbReference>
<dbReference type="SUPFAM" id="SSF103263">
    <property type="entry name" value="Chorismate synthase, AroC"/>
    <property type="match status" value="1"/>
</dbReference>
<dbReference type="PROSITE" id="PS00787">
    <property type="entry name" value="CHORISMATE_SYNTHASE_1"/>
    <property type="match status" value="1"/>
</dbReference>
<dbReference type="PROSITE" id="PS00788">
    <property type="entry name" value="CHORISMATE_SYNTHASE_2"/>
    <property type="match status" value="1"/>
</dbReference>
<dbReference type="PROSITE" id="PS00789">
    <property type="entry name" value="CHORISMATE_SYNTHASE_3"/>
    <property type="match status" value="1"/>
</dbReference>